<keyword id="KW-0067">ATP-binding</keyword>
<keyword id="KW-0963">Cytoplasm</keyword>
<keyword id="KW-0227">DNA damage</keyword>
<keyword id="KW-0233">DNA recombination</keyword>
<keyword id="KW-0234">DNA repair</keyword>
<keyword id="KW-0238">DNA-binding</keyword>
<keyword id="KW-0547">Nucleotide-binding</keyword>
<keyword id="KW-0742">SOS response</keyword>
<comment type="function">
    <text evidence="1">Can catalyze the hydrolysis of ATP in the presence of single-stranded DNA, the ATP-dependent uptake of single-stranded DNA by duplex DNA, and the ATP-dependent hybridization of homologous single-stranded DNAs. It interacts with LexA causing its activation and leading to its autocatalytic cleavage.</text>
</comment>
<comment type="subcellular location">
    <subcellularLocation>
        <location evidence="1">Cytoplasm</location>
    </subcellularLocation>
</comment>
<comment type="similarity">
    <text evidence="1">Belongs to the RecA family.</text>
</comment>
<accession>B4U0I8</accession>
<evidence type="ECO:0000255" key="1">
    <source>
        <dbReference type="HAMAP-Rule" id="MF_00268"/>
    </source>
</evidence>
<gene>
    <name evidence="1" type="primary">recA</name>
    <name type="ordered locus">Sez_1873</name>
</gene>
<sequence>MAKKVKKNEEITKKFGDERRKALDDALKNIEKDFGKGAVMRLGERAEQKVQVMSSGSLALDIALGAGGYPKGRIIEIYGPESSGKTTVALHAVAQAQKEGGIAAFIDAEHALDPAYAAALGVNIDELLLSQPDSGEQGLEIAGKLIDSGAVDLVVVDSVAALVPRAEIDGDIGDNHVGLQARMMSQAMRKLSASINKTKTIAIFINQLREKVGVMFGNPETTPGGRALKFYASVRLDVRGTTQIKGTGDQKDSSIGKETKIKVVKNKVAPPFKVAEVEIMYGEGISRTGELIKIASDLDIIQKAGAWFSYNGEKIGQGSENAKRYLADHPELFDEIDHKVRVKFGLLEDTEESAAVDPAAAKADELVLELDDAIEIED</sequence>
<organism>
    <name type="scientific">Streptococcus equi subsp. zooepidemicus (strain MGCS10565)</name>
    <dbReference type="NCBI Taxonomy" id="552526"/>
    <lineage>
        <taxon>Bacteria</taxon>
        <taxon>Bacillati</taxon>
        <taxon>Bacillota</taxon>
        <taxon>Bacilli</taxon>
        <taxon>Lactobacillales</taxon>
        <taxon>Streptococcaceae</taxon>
        <taxon>Streptococcus</taxon>
    </lineage>
</organism>
<dbReference type="EMBL" id="CP001129">
    <property type="protein sequence ID" value="ACG63197.1"/>
    <property type="molecule type" value="Genomic_DNA"/>
</dbReference>
<dbReference type="RefSeq" id="WP_012516441.1">
    <property type="nucleotide sequence ID" value="NC_011134.1"/>
</dbReference>
<dbReference type="SMR" id="B4U0I8"/>
<dbReference type="GeneID" id="83705766"/>
<dbReference type="KEGG" id="sez:Sez_1873"/>
<dbReference type="HOGENOM" id="CLU_040469_3_2_9"/>
<dbReference type="Proteomes" id="UP000001873">
    <property type="component" value="Chromosome"/>
</dbReference>
<dbReference type="GO" id="GO:0005829">
    <property type="term" value="C:cytosol"/>
    <property type="evidence" value="ECO:0007669"/>
    <property type="project" value="TreeGrafter"/>
</dbReference>
<dbReference type="GO" id="GO:0005524">
    <property type="term" value="F:ATP binding"/>
    <property type="evidence" value="ECO:0007669"/>
    <property type="project" value="UniProtKB-UniRule"/>
</dbReference>
<dbReference type="GO" id="GO:0016887">
    <property type="term" value="F:ATP hydrolysis activity"/>
    <property type="evidence" value="ECO:0007669"/>
    <property type="project" value="InterPro"/>
</dbReference>
<dbReference type="GO" id="GO:0140664">
    <property type="term" value="F:ATP-dependent DNA damage sensor activity"/>
    <property type="evidence" value="ECO:0007669"/>
    <property type="project" value="InterPro"/>
</dbReference>
<dbReference type="GO" id="GO:0003684">
    <property type="term" value="F:damaged DNA binding"/>
    <property type="evidence" value="ECO:0007669"/>
    <property type="project" value="UniProtKB-UniRule"/>
</dbReference>
<dbReference type="GO" id="GO:0003697">
    <property type="term" value="F:single-stranded DNA binding"/>
    <property type="evidence" value="ECO:0007669"/>
    <property type="project" value="UniProtKB-UniRule"/>
</dbReference>
<dbReference type="GO" id="GO:0006310">
    <property type="term" value="P:DNA recombination"/>
    <property type="evidence" value="ECO:0007669"/>
    <property type="project" value="UniProtKB-UniRule"/>
</dbReference>
<dbReference type="GO" id="GO:0006281">
    <property type="term" value="P:DNA repair"/>
    <property type="evidence" value="ECO:0007669"/>
    <property type="project" value="UniProtKB-UniRule"/>
</dbReference>
<dbReference type="GO" id="GO:0009432">
    <property type="term" value="P:SOS response"/>
    <property type="evidence" value="ECO:0007669"/>
    <property type="project" value="UniProtKB-UniRule"/>
</dbReference>
<dbReference type="CDD" id="cd00983">
    <property type="entry name" value="RecA"/>
    <property type="match status" value="1"/>
</dbReference>
<dbReference type="FunFam" id="3.40.50.300:FF:000087">
    <property type="entry name" value="Recombinase RecA"/>
    <property type="match status" value="1"/>
</dbReference>
<dbReference type="Gene3D" id="3.40.50.300">
    <property type="entry name" value="P-loop containing nucleotide triphosphate hydrolases"/>
    <property type="match status" value="1"/>
</dbReference>
<dbReference type="HAMAP" id="MF_00268">
    <property type="entry name" value="RecA"/>
    <property type="match status" value="1"/>
</dbReference>
<dbReference type="InterPro" id="IPR003593">
    <property type="entry name" value="AAA+_ATPase"/>
</dbReference>
<dbReference type="InterPro" id="IPR013765">
    <property type="entry name" value="DNA_recomb/repair_RecA"/>
</dbReference>
<dbReference type="InterPro" id="IPR020584">
    <property type="entry name" value="DNA_recomb/repair_RecA_CS"/>
</dbReference>
<dbReference type="InterPro" id="IPR027417">
    <property type="entry name" value="P-loop_NTPase"/>
</dbReference>
<dbReference type="InterPro" id="IPR049261">
    <property type="entry name" value="RecA-like_C"/>
</dbReference>
<dbReference type="InterPro" id="IPR049428">
    <property type="entry name" value="RecA-like_N"/>
</dbReference>
<dbReference type="InterPro" id="IPR020588">
    <property type="entry name" value="RecA_ATP-bd"/>
</dbReference>
<dbReference type="InterPro" id="IPR023400">
    <property type="entry name" value="RecA_C_sf"/>
</dbReference>
<dbReference type="InterPro" id="IPR020587">
    <property type="entry name" value="RecA_monomer-monomer_interface"/>
</dbReference>
<dbReference type="NCBIfam" id="TIGR02012">
    <property type="entry name" value="tigrfam_recA"/>
    <property type="match status" value="1"/>
</dbReference>
<dbReference type="PANTHER" id="PTHR45900:SF1">
    <property type="entry name" value="MITOCHONDRIAL DNA REPAIR PROTEIN RECA HOMOLOG-RELATED"/>
    <property type="match status" value="1"/>
</dbReference>
<dbReference type="PANTHER" id="PTHR45900">
    <property type="entry name" value="RECA"/>
    <property type="match status" value="1"/>
</dbReference>
<dbReference type="Pfam" id="PF00154">
    <property type="entry name" value="RecA"/>
    <property type="match status" value="1"/>
</dbReference>
<dbReference type="Pfam" id="PF21096">
    <property type="entry name" value="RecA_C"/>
    <property type="match status" value="1"/>
</dbReference>
<dbReference type="PRINTS" id="PR00142">
    <property type="entry name" value="RECA"/>
</dbReference>
<dbReference type="SMART" id="SM00382">
    <property type="entry name" value="AAA"/>
    <property type="match status" value="1"/>
</dbReference>
<dbReference type="SUPFAM" id="SSF52540">
    <property type="entry name" value="P-loop containing nucleoside triphosphate hydrolases"/>
    <property type="match status" value="1"/>
</dbReference>
<dbReference type="SUPFAM" id="SSF54752">
    <property type="entry name" value="RecA protein, C-terminal domain"/>
    <property type="match status" value="1"/>
</dbReference>
<dbReference type="PROSITE" id="PS00321">
    <property type="entry name" value="RECA_1"/>
    <property type="match status" value="1"/>
</dbReference>
<dbReference type="PROSITE" id="PS50162">
    <property type="entry name" value="RECA_2"/>
    <property type="match status" value="1"/>
</dbReference>
<dbReference type="PROSITE" id="PS50163">
    <property type="entry name" value="RECA_3"/>
    <property type="match status" value="1"/>
</dbReference>
<reference key="1">
    <citation type="journal article" date="2008" name="PLoS ONE">
        <title>Genome sequence of a lancefield group C Streptococcus zooepidemicus strain causing epidemic nephritis: new information about an old disease.</title>
        <authorList>
            <person name="Beres S.B."/>
            <person name="Sesso R."/>
            <person name="Pinto S.W.L."/>
            <person name="Hoe N.P."/>
            <person name="Porcella S.F."/>
            <person name="Deleo F.R."/>
            <person name="Musser J.M."/>
        </authorList>
    </citation>
    <scope>NUCLEOTIDE SEQUENCE [LARGE SCALE GENOMIC DNA]</scope>
    <source>
        <strain>MGCS10565</strain>
    </source>
</reference>
<feature type="chain" id="PRO_1000114370" description="Protein RecA">
    <location>
        <begin position="1"/>
        <end position="378"/>
    </location>
</feature>
<feature type="binding site" evidence="1">
    <location>
        <begin position="79"/>
        <end position="86"/>
    </location>
    <ligand>
        <name>ATP</name>
        <dbReference type="ChEBI" id="CHEBI:30616"/>
    </ligand>
</feature>
<name>RECA_STREM</name>
<protein>
    <recommendedName>
        <fullName evidence="1">Protein RecA</fullName>
    </recommendedName>
    <alternativeName>
        <fullName evidence="1">Recombinase A</fullName>
    </alternativeName>
</protein>
<proteinExistence type="inferred from homology"/>